<comment type="function">
    <text evidence="1">Assembles around the rod to form the L-ring and probably protects the motor/basal body from shearing forces during rotation.</text>
</comment>
<comment type="subunit">
    <text evidence="1">The basal body constitutes a major portion of the flagellar organelle and consists of four rings (L,P,S, and M) mounted on a central rod.</text>
</comment>
<comment type="subcellular location">
    <subcellularLocation>
        <location evidence="1">Periplasm</location>
    </subcellularLocation>
    <subcellularLocation>
        <location evidence="1">Bacterial flagellum basal body</location>
    </subcellularLocation>
</comment>
<comment type="similarity">
    <text evidence="1">Belongs to the FlgI family.</text>
</comment>
<feature type="signal peptide" evidence="1">
    <location>
        <begin position="1"/>
        <end position="22"/>
    </location>
</feature>
<feature type="chain" id="PRO_1000072288" description="Flagellar P-ring protein">
    <location>
        <begin position="23"/>
        <end position="331"/>
    </location>
</feature>
<dbReference type="EMBL" id="CP000812">
    <property type="protein sequence ID" value="ABV32945.1"/>
    <property type="molecule type" value="Genomic_DNA"/>
</dbReference>
<dbReference type="RefSeq" id="WP_012002426.1">
    <property type="nucleotide sequence ID" value="NZ_BSDV01000001.1"/>
</dbReference>
<dbReference type="SMR" id="A8F461"/>
<dbReference type="STRING" id="416591.Tlet_0378"/>
<dbReference type="KEGG" id="tle:Tlet_0378"/>
<dbReference type="eggNOG" id="COG1706">
    <property type="taxonomic scope" value="Bacteria"/>
</dbReference>
<dbReference type="HOGENOM" id="CLU_045235_1_0_0"/>
<dbReference type="OrthoDB" id="9786431at2"/>
<dbReference type="Proteomes" id="UP000002016">
    <property type="component" value="Chromosome"/>
</dbReference>
<dbReference type="GO" id="GO:0009428">
    <property type="term" value="C:bacterial-type flagellum basal body, distal rod, P ring"/>
    <property type="evidence" value="ECO:0007669"/>
    <property type="project" value="InterPro"/>
</dbReference>
<dbReference type="GO" id="GO:0030288">
    <property type="term" value="C:outer membrane-bounded periplasmic space"/>
    <property type="evidence" value="ECO:0007669"/>
    <property type="project" value="InterPro"/>
</dbReference>
<dbReference type="GO" id="GO:0005198">
    <property type="term" value="F:structural molecule activity"/>
    <property type="evidence" value="ECO:0007669"/>
    <property type="project" value="InterPro"/>
</dbReference>
<dbReference type="GO" id="GO:0071973">
    <property type="term" value="P:bacterial-type flagellum-dependent cell motility"/>
    <property type="evidence" value="ECO:0007669"/>
    <property type="project" value="InterPro"/>
</dbReference>
<dbReference type="HAMAP" id="MF_00416">
    <property type="entry name" value="FlgI"/>
    <property type="match status" value="1"/>
</dbReference>
<dbReference type="InterPro" id="IPR001782">
    <property type="entry name" value="Flag_FlgI"/>
</dbReference>
<dbReference type="NCBIfam" id="NF003676">
    <property type="entry name" value="PRK05303.1"/>
    <property type="match status" value="1"/>
</dbReference>
<dbReference type="PANTHER" id="PTHR30381">
    <property type="entry name" value="FLAGELLAR P-RING PERIPLASMIC PROTEIN FLGI"/>
    <property type="match status" value="1"/>
</dbReference>
<dbReference type="PANTHER" id="PTHR30381:SF0">
    <property type="entry name" value="FLAGELLAR P-RING PROTEIN"/>
    <property type="match status" value="1"/>
</dbReference>
<dbReference type="Pfam" id="PF02119">
    <property type="entry name" value="FlgI"/>
    <property type="match status" value="2"/>
</dbReference>
<dbReference type="PRINTS" id="PR01010">
    <property type="entry name" value="FLGPRINGFLGI"/>
</dbReference>
<accession>A8F461</accession>
<keyword id="KW-0975">Bacterial flagellum</keyword>
<keyword id="KW-0574">Periplasm</keyword>
<keyword id="KW-1185">Reference proteome</keyword>
<keyword id="KW-0732">Signal</keyword>
<protein>
    <recommendedName>
        <fullName evidence="1">Flagellar P-ring protein</fullName>
    </recommendedName>
    <alternativeName>
        <fullName evidence="1">Basal body P-ring protein</fullName>
    </alternativeName>
</protein>
<reference key="1">
    <citation type="submission" date="2007-08" db="EMBL/GenBank/DDBJ databases">
        <title>Complete sequence of Thermotoga lettingae TMO.</title>
        <authorList>
            <consortium name="US DOE Joint Genome Institute"/>
            <person name="Copeland A."/>
            <person name="Lucas S."/>
            <person name="Lapidus A."/>
            <person name="Barry K."/>
            <person name="Glavina del Rio T."/>
            <person name="Dalin E."/>
            <person name="Tice H."/>
            <person name="Pitluck S."/>
            <person name="Foster B."/>
            <person name="Bruce D."/>
            <person name="Schmutz J."/>
            <person name="Larimer F."/>
            <person name="Land M."/>
            <person name="Hauser L."/>
            <person name="Kyrpides N."/>
            <person name="Mikhailova N."/>
            <person name="Nelson K."/>
            <person name="Gogarten J.P."/>
            <person name="Noll K."/>
            <person name="Richardson P."/>
        </authorList>
    </citation>
    <scope>NUCLEOTIDE SEQUENCE [LARGE SCALE GENOMIC DNA]</scope>
    <source>
        <strain>ATCC BAA-301 / DSM 14385 / NBRC 107922 / TMO</strain>
    </source>
</reference>
<name>FLGI_PSELT</name>
<gene>
    <name evidence="1" type="primary">flgI</name>
    <name type="ordered locus">Tlet_0378</name>
</gene>
<organism>
    <name type="scientific">Pseudothermotoga lettingae (strain ATCC BAA-301 / DSM 14385 / NBRC 107922 / TMO)</name>
    <name type="common">Thermotoga lettingae</name>
    <dbReference type="NCBI Taxonomy" id="416591"/>
    <lineage>
        <taxon>Bacteria</taxon>
        <taxon>Thermotogati</taxon>
        <taxon>Thermotogota</taxon>
        <taxon>Thermotogae</taxon>
        <taxon>Thermotogales</taxon>
        <taxon>Thermotogaceae</taxon>
        <taxon>Pseudothermotoga</taxon>
    </lineage>
</organism>
<sequence>MRKVTIFIIIIVALTGFGSVRIKDIADFRGARDNQLFGIGVVVGLNGTGDSGQVNSTLLANMAKAFNVSIDSDSLKTKNSALVMVFADIPPFYKEGMRLDVSVASIGDAKSLEGGFLVQTPLYGADGNVYAVAQGNVSVGGFDVKVSANLQNKYRIVGYIPNGAIVEKEIPFEFVQSNSVTILLKKPDFTTSARVAQAINTTFERKIAKAVDASSIKIEVPSAFEDDIVTFLSLVEEVEVSVDQPARVVVNEKTGTVVFGGNVKILDFTLSYGVFNITVKNGKVESSEEVDATVSSLVSALKNLGATPQDIIAILQTMHSAGVLLADLVVM</sequence>
<evidence type="ECO:0000255" key="1">
    <source>
        <dbReference type="HAMAP-Rule" id="MF_00416"/>
    </source>
</evidence>
<proteinExistence type="inferred from homology"/>